<evidence type="ECO:0000255" key="1">
    <source>
        <dbReference type="HAMAP-Rule" id="MF_00378"/>
    </source>
</evidence>
<sequence length="451" mass="50080">MSDFFHSDVLSVSELNAFAKSLLENHLAGLWIAGEVSNLTRAASGHYYFSLKDSRAQVRCAMFKGAAVRLAKPLKEGDHIEVSGKISIYEARGEFQITVNEVRLKGLGQLYEAYERLKAQLQAEGAFAAERKKPLPVRPQCIGIVTSLAAAALRDVVTTLKRRAPEIPVIVYPTPVQGAGSELQIAQAIKTASQRAECDVLIVCRGGGSIEDLWAFNEEPVVRAIESCTVPVVSGVGHETDFTLADFVADMRAPTPTGAAELVSPNRQESLHRLAQAQCRLKTVLEQRYFDASQKLDWLARQIRHPRQKLDEQRASIGKLAQTLSYSMTQNVRTHTARFERQTQALKHCRPDVSVCKKNIDRFQTALSHAFHQLLTHRRQSLTAQAALLEAVSPQHILERGFSVVKNTRGQVIRNADVLKQGQKLHIIFADGETDVRVSKEQGQQDLFDCI</sequence>
<name>EX7L_NEIMB</name>
<gene>
    <name evidence="1" type="primary">xseA</name>
    <name type="ordered locus">NMB1363</name>
</gene>
<organism>
    <name type="scientific">Neisseria meningitidis serogroup B (strain ATCC BAA-335 / MC58)</name>
    <dbReference type="NCBI Taxonomy" id="122586"/>
    <lineage>
        <taxon>Bacteria</taxon>
        <taxon>Pseudomonadati</taxon>
        <taxon>Pseudomonadota</taxon>
        <taxon>Betaproteobacteria</taxon>
        <taxon>Neisseriales</taxon>
        <taxon>Neisseriaceae</taxon>
        <taxon>Neisseria</taxon>
    </lineage>
</organism>
<dbReference type="EC" id="3.1.11.6" evidence="1"/>
<dbReference type="EMBL" id="AE002098">
    <property type="protein sequence ID" value="AAF41737.1"/>
    <property type="molecule type" value="Genomic_DNA"/>
</dbReference>
<dbReference type="PIR" id="D81092">
    <property type="entry name" value="D81092"/>
</dbReference>
<dbReference type="RefSeq" id="NP_274381.1">
    <property type="nucleotide sequence ID" value="NC_003112.2"/>
</dbReference>
<dbReference type="RefSeq" id="WP_002225145.1">
    <property type="nucleotide sequence ID" value="NC_003112.2"/>
</dbReference>
<dbReference type="SMR" id="Q9JYZ2"/>
<dbReference type="FunCoup" id="Q9JYZ2">
    <property type="interactions" value="258"/>
</dbReference>
<dbReference type="STRING" id="122586.NMB1363"/>
<dbReference type="PaxDb" id="122586-NMB1363"/>
<dbReference type="KEGG" id="nme:NMB1363"/>
<dbReference type="PATRIC" id="fig|122586.8.peg.1706"/>
<dbReference type="HOGENOM" id="CLU_023625_2_0_4"/>
<dbReference type="InParanoid" id="Q9JYZ2"/>
<dbReference type="OrthoDB" id="9802795at2"/>
<dbReference type="Proteomes" id="UP000000425">
    <property type="component" value="Chromosome"/>
</dbReference>
<dbReference type="GO" id="GO:0005737">
    <property type="term" value="C:cytoplasm"/>
    <property type="evidence" value="ECO:0007669"/>
    <property type="project" value="UniProtKB-SubCell"/>
</dbReference>
<dbReference type="GO" id="GO:0009318">
    <property type="term" value="C:exodeoxyribonuclease VII complex"/>
    <property type="evidence" value="ECO:0007669"/>
    <property type="project" value="InterPro"/>
</dbReference>
<dbReference type="GO" id="GO:0008855">
    <property type="term" value="F:exodeoxyribonuclease VII activity"/>
    <property type="evidence" value="ECO:0007669"/>
    <property type="project" value="UniProtKB-UniRule"/>
</dbReference>
<dbReference type="GO" id="GO:0003676">
    <property type="term" value="F:nucleic acid binding"/>
    <property type="evidence" value="ECO:0007669"/>
    <property type="project" value="InterPro"/>
</dbReference>
<dbReference type="GO" id="GO:0006308">
    <property type="term" value="P:DNA catabolic process"/>
    <property type="evidence" value="ECO:0007669"/>
    <property type="project" value="UniProtKB-UniRule"/>
</dbReference>
<dbReference type="CDD" id="cd04489">
    <property type="entry name" value="ExoVII_LU_OBF"/>
    <property type="match status" value="1"/>
</dbReference>
<dbReference type="Gene3D" id="2.40.50.1010">
    <property type="match status" value="1"/>
</dbReference>
<dbReference type="HAMAP" id="MF_00378">
    <property type="entry name" value="Exonuc_7_L"/>
    <property type="match status" value="1"/>
</dbReference>
<dbReference type="InterPro" id="IPR003753">
    <property type="entry name" value="Exonuc_VII_L"/>
</dbReference>
<dbReference type="InterPro" id="IPR020579">
    <property type="entry name" value="Exonuc_VII_lsu_C"/>
</dbReference>
<dbReference type="InterPro" id="IPR025824">
    <property type="entry name" value="OB-fold_nuc-bd_dom"/>
</dbReference>
<dbReference type="NCBIfam" id="TIGR00237">
    <property type="entry name" value="xseA"/>
    <property type="match status" value="1"/>
</dbReference>
<dbReference type="PANTHER" id="PTHR30008">
    <property type="entry name" value="EXODEOXYRIBONUCLEASE 7 LARGE SUBUNIT"/>
    <property type="match status" value="1"/>
</dbReference>
<dbReference type="PANTHER" id="PTHR30008:SF0">
    <property type="entry name" value="EXODEOXYRIBONUCLEASE 7 LARGE SUBUNIT"/>
    <property type="match status" value="1"/>
</dbReference>
<dbReference type="Pfam" id="PF02601">
    <property type="entry name" value="Exonuc_VII_L"/>
    <property type="match status" value="1"/>
</dbReference>
<dbReference type="Pfam" id="PF13742">
    <property type="entry name" value="tRNA_anti_2"/>
    <property type="match status" value="1"/>
</dbReference>
<proteinExistence type="inferred from homology"/>
<keyword id="KW-0963">Cytoplasm</keyword>
<keyword id="KW-0269">Exonuclease</keyword>
<keyword id="KW-0378">Hydrolase</keyword>
<keyword id="KW-0540">Nuclease</keyword>
<keyword id="KW-1185">Reference proteome</keyword>
<feature type="chain" id="PRO_0000197863" description="Exodeoxyribonuclease 7 large subunit">
    <location>
        <begin position="1"/>
        <end position="451"/>
    </location>
</feature>
<comment type="function">
    <text evidence="1">Bidirectionally degrades single-stranded DNA into large acid-insoluble oligonucleotides, which are then degraded further into small acid-soluble oligonucleotides.</text>
</comment>
<comment type="catalytic activity">
    <reaction evidence="1">
        <text>Exonucleolytic cleavage in either 5'- to 3'- or 3'- to 5'-direction to yield nucleoside 5'-phosphates.</text>
        <dbReference type="EC" id="3.1.11.6"/>
    </reaction>
</comment>
<comment type="subunit">
    <text evidence="1">Heterooligomer composed of large and small subunits.</text>
</comment>
<comment type="subcellular location">
    <subcellularLocation>
        <location evidence="1">Cytoplasm</location>
    </subcellularLocation>
</comment>
<comment type="similarity">
    <text evidence="1">Belongs to the XseA family.</text>
</comment>
<protein>
    <recommendedName>
        <fullName evidence="1">Exodeoxyribonuclease 7 large subunit</fullName>
        <ecNumber evidence="1">3.1.11.6</ecNumber>
    </recommendedName>
    <alternativeName>
        <fullName evidence="1">Exodeoxyribonuclease VII large subunit</fullName>
        <shortName evidence="1">Exonuclease VII large subunit</shortName>
    </alternativeName>
</protein>
<accession>Q9JYZ2</accession>
<reference key="1">
    <citation type="journal article" date="2000" name="Science">
        <title>Complete genome sequence of Neisseria meningitidis serogroup B strain MC58.</title>
        <authorList>
            <person name="Tettelin H."/>
            <person name="Saunders N.J."/>
            <person name="Heidelberg J.F."/>
            <person name="Jeffries A.C."/>
            <person name="Nelson K.E."/>
            <person name="Eisen J.A."/>
            <person name="Ketchum K.A."/>
            <person name="Hood D.W."/>
            <person name="Peden J.F."/>
            <person name="Dodson R.J."/>
            <person name="Nelson W.C."/>
            <person name="Gwinn M.L."/>
            <person name="DeBoy R.T."/>
            <person name="Peterson J.D."/>
            <person name="Hickey E.K."/>
            <person name="Haft D.H."/>
            <person name="Salzberg S.L."/>
            <person name="White O."/>
            <person name="Fleischmann R.D."/>
            <person name="Dougherty B.A."/>
            <person name="Mason T.M."/>
            <person name="Ciecko A."/>
            <person name="Parksey D.S."/>
            <person name="Blair E."/>
            <person name="Cittone H."/>
            <person name="Clark E.B."/>
            <person name="Cotton M.D."/>
            <person name="Utterback T.R."/>
            <person name="Khouri H.M."/>
            <person name="Qin H."/>
            <person name="Vamathevan J.J."/>
            <person name="Gill J."/>
            <person name="Scarlato V."/>
            <person name="Masignani V."/>
            <person name="Pizza M."/>
            <person name="Grandi G."/>
            <person name="Sun L."/>
            <person name="Smith H.O."/>
            <person name="Fraser C.M."/>
            <person name="Moxon E.R."/>
            <person name="Rappuoli R."/>
            <person name="Venter J.C."/>
        </authorList>
    </citation>
    <scope>NUCLEOTIDE SEQUENCE [LARGE SCALE GENOMIC DNA]</scope>
    <source>
        <strain>ATCC BAA-335 / MC58</strain>
    </source>
</reference>